<sequence>MSSAAGPDPSEAPEERHFLRALELQPPLADMGRAELSSNATTSLVQRRKQAWGRQSWLEQIWNAGPVCQSTAEAAALERELLEDYRFGRQQLVELCGHASAVAVTKAFPLPALSRKQRTVLVVCGPEQNGAVGLVCARHLRVFEYEPTIFYPTRSLDLLHRDLTTQCEKMDIPFLSYLPTEVQLINEAYGLVVDAVLGPGVEPGEVGGPCTRALATLKLLSIPLVSLDIPSGWDAETGSDSEDGLRPDVLVSLAAPKRCAGRFSGRHHFVAGRFVPDDVRRKFALRLPGYTGTDCVAAL</sequence>
<reference key="1">
    <citation type="submission" date="2006-06" db="EMBL/GenBank/DDBJ databases">
        <title>A computer system platform used to predict novel genes and some proteins similar to apolipoprotein a1 binding protein.</title>
        <authorList>
            <person name="Yu Z."/>
            <person name="Zheng Z."/>
            <person name="Tang T."/>
            <person name="Fu Y."/>
        </authorList>
    </citation>
    <scope>NUCLEOTIDE SEQUENCE [MRNA] (ISOFORMS 1 AND 2)</scope>
</reference>
<reference key="2">
    <citation type="journal article" date="2004" name="Nature">
        <title>The DNA sequence and biology of human chromosome 19.</title>
        <authorList>
            <person name="Grimwood J."/>
            <person name="Gordon L.A."/>
            <person name="Olsen A.S."/>
            <person name="Terry A."/>
            <person name="Schmutz J."/>
            <person name="Lamerdin J.E."/>
            <person name="Hellsten U."/>
            <person name="Goodstein D."/>
            <person name="Couronne O."/>
            <person name="Tran-Gyamfi M."/>
            <person name="Aerts A."/>
            <person name="Altherr M."/>
            <person name="Ashworth L."/>
            <person name="Bajorek E."/>
            <person name="Black S."/>
            <person name="Branscomb E."/>
            <person name="Caenepeel S."/>
            <person name="Carrano A.V."/>
            <person name="Caoile C."/>
            <person name="Chan Y.M."/>
            <person name="Christensen M."/>
            <person name="Cleland C.A."/>
            <person name="Copeland A."/>
            <person name="Dalin E."/>
            <person name="Dehal P."/>
            <person name="Denys M."/>
            <person name="Detter J.C."/>
            <person name="Escobar J."/>
            <person name="Flowers D."/>
            <person name="Fotopulos D."/>
            <person name="Garcia C."/>
            <person name="Georgescu A.M."/>
            <person name="Glavina T."/>
            <person name="Gomez M."/>
            <person name="Gonzales E."/>
            <person name="Groza M."/>
            <person name="Hammon N."/>
            <person name="Hawkins T."/>
            <person name="Haydu L."/>
            <person name="Ho I."/>
            <person name="Huang W."/>
            <person name="Israni S."/>
            <person name="Jett J."/>
            <person name="Kadner K."/>
            <person name="Kimball H."/>
            <person name="Kobayashi A."/>
            <person name="Larionov V."/>
            <person name="Leem S.-H."/>
            <person name="Lopez F."/>
            <person name="Lou Y."/>
            <person name="Lowry S."/>
            <person name="Malfatti S."/>
            <person name="Martinez D."/>
            <person name="McCready P.M."/>
            <person name="Medina C."/>
            <person name="Morgan J."/>
            <person name="Nelson K."/>
            <person name="Nolan M."/>
            <person name="Ovcharenko I."/>
            <person name="Pitluck S."/>
            <person name="Pollard M."/>
            <person name="Popkie A.P."/>
            <person name="Predki P."/>
            <person name="Quan G."/>
            <person name="Ramirez L."/>
            <person name="Rash S."/>
            <person name="Retterer J."/>
            <person name="Rodriguez A."/>
            <person name="Rogers S."/>
            <person name="Salamov A."/>
            <person name="Salazar A."/>
            <person name="She X."/>
            <person name="Smith D."/>
            <person name="Slezak T."/>
            <person name="Solovyev V."/>
            <person name="Thayer N."/>
            <person name="Tice H."/>
            <person name="Tsai M."/>
            <person name="Ustaszewska A."/>
            <person name="Vo N."/>
            <person name="Wagner M."/>
            <person name="Wheeler J."/>
            <person name="Wu K."/>
            <person name="Xie G."/>
            <person name="Yang J."/>
            <person name="Dubchak I."/>
            <person name="Furey T.S."/>
            <person name="DeJong P."/>
            <person name="Dickson M."/>
            <person name="Gordon D."/>
            <person name="Eichler E.E."/>
            <person name="Pennacchio L.A."/>
            <person name="Richardson P."/>
            <person name="Stubbs L."/>
            <person name="Rokhsar D.S."/>
            <person name="Myers R.M."/>
            <person name="Rubin E.M."/>
            <person name="Lucas S.M."/>
        </authorList>
    </citation>
    <scope>NUCLEOTIDE SEQUENCE [LARGE SCALE GENOMIC DNA]</scope>
</reference>
<reference key="3">
    <citation type="submission" date="2005-07" db="EMBL/GenBank/DDBJ databases">
        <authorList>
            <person name="Mural R.J."/>
            <person name="Istrail S."/>
            <person name="Sutton G.G."/>
            <person name="Florea L."/>
            <person name="Halpern A.L."/>
            <person name="Mobarry C.M."/>
            <person name="Lippert R."/>
            <person name="Walenz B."/>
            <person name="Shatkay H."/>
            <person name="Dew I."/>
            <person name="Miller J.R."/>
            <person name="Flanigan M.J."/>
            <person name="Edwards N.J."/>
            <person name="Bolanos R."/>
            <person name="Fasulo D."/>
            <person name="Halldorsson B.V."/>
            <person name="Hannenhalli S."/>
            <person name="Turner R."/>
            <person name="Yooseph S."/>
            <person name="Lu F."/>
            <person name="Nusskern D.R."/>
            <person name="Shue B.C."/>
            <person name="Zheng X.H."/>
            <person name="Zhong F."/>
            <person name="Delcher A.L."/>
            <person name="Huson D.H."/>
            <person name="Kravitz S.A."/>
            <person name="Mouchard L."/>
            <person name="Reinert K."/>
            <person name="Remington K.A."/>
            <person name="Clark A.G."/>
            <person name="Waterman M.S."/>
            <person name="Eichler E.E."/>
            <person name="Adams M.D."/>
            <person name="Hunkapiller M.W."/>
            <person name="Myers E.W."/>
            <person name="Venter J.C."/>
        </authorList>
    </citation>
    <scope>NUCLEOTIDE SEQUENCE [LARGE SCALE GENOMIC DNA]</scope>
</reference>
<reference key="4">
    <citation type="journal article" date="2004" name="Genome Res.">
        <title>The status, quality, and expansion of the NIH full-length cDNA project: the Mammalian Gene Collection (MGC).</title>
        <authorList>
            <consortium name="The MGC Project Team"/>
        </authorList>
    </citation>
    <scope>NUCLEOTIDE SEQUENCE [LARGE SCALE MRNA] (ISOFORM 1)</scope>
    <source>
        <tissue>Brain</tissue>
    </source>
</reference>
<reference key="5">
    <citation type="journal article" date="2007" name="Horm. Metab. Res.">
        <title>ApoA-I-binding protein (AI-BP) and its homologues hYjeF_N2 and hYjeF_N3 comprise the YjeF_N domain protein family in humans with a role in spermiogenesis and oogenesis.</title>
        <authorList>
            <person name="Rudolph C."/>
            <person name="Sigruener A."/>
            <person name="Hartmann A."/>
            <person name="Orso E."/>
            <person name="Bals-Pratsch M."/>
            <person name="Gronwald W."/>
            <person name="Seifert B."/>
            <person name="Kalbitzer H.R."/>
            <person name="Verdorfer I."/>
            <person name="Luetjens C.M."/>
            <person name="Ortmann O."/>
            <person name="Bornstein S.R."/>
            <person name="Schmitz G."/>
        </authorList>
    </citation>
    <scope>FUNCTION</scope>
    <scope>TISSUE SPECIFICITY</scope>
</reference>
<reference key="6">
    <citation type="journal article" date="2013" name="Nature">
        <title>Control of angiogenesis by AIBP-mediated cholesterol efflux.</title>
        <authorList>
            <person name="Fang L."/>
            <person name="Choi S.H."/>
            <person name="Baek J.S."/>
            <person name="Liu C."/>
            <person name="Almazan F."/>
            <person name="Ulrich F."/>
            <person name="Wiesner P."/>
            <person name="Taleb A."/>
            <person name="Deer E."/>
            <person name="Pattison J."/>
            <person name="Torres-Vazquez J."/>
            <person name="Li A.C."/>
            <person name="Miller Y.I."/>
        </authorList>
    </citation>
    <scope>INTERACTION WITH APOA1</scope>
</reference>
<name>YJEN3_HUMAN</name>
<protein>
    <recommendedName>
        <fullName evidence="6">YjeF N-terminal domain-containing protein 3</fullName>
        <shortName>YjeF_N3</shortName>
        <shortName>hYjeF_N3</shortName>
    </recommendedName>
    <alternativeName>
        <fullName evidence="1">ApoA-I-binding protein 2</fullName>
    </alternativeName>
</protein>
<dbReference type="EMBL" id="DQ778080">
    <property type="protein sequence ID" value="ABI63344.1"/>
    <property type="molecule type" value="mRNA"/>
</dbReference>
<dbReference type="EMBL" id="DQ778079">
    <property type="protein sequence ID" value="ABI63349.1"/>
    <property type="molecule type" value="mRNA"/>
</dbReference>
<dbReference type="EMBL" id="AC011448">
    <property type="status" value="NOT_ANNOTATED_CDS"/>
    <property type="molecule type" value="Genomic_DNA"/>
</dbReference>
<dbReference type="EMBL" id="CH471106">
    <property type="protein sequence ID" value="EAW84827.1"/>
    <property type="molecule type" value="Genomic_DNA"/>
</dbReference>
<dbReference type="EMBL" id="BC020948">
    <property type="status" value="NOT_ANNOTATED_CDS"/>
    <property type="molecule type" value="mRNA"/>
</dbReference>
<dbReference type="CCDS" id="CCDS42530.1">
    <molecule id="A6XGL0-1"/>
</dbReference>
<dbReference type="CCDS" id="CCDS54236.1">
    <molecule id="A6XGL0-2"/>
</dbReference>
<dbReference type="RefSeq" id="NP_001177257.1">
    <molecule id="A6XGL0-2"/>
    <property type="nucleotide sequence ID" value="NM_001190328.2"/>
</dbReference>
<dbReference type="RefSeq" id="NP_940939.2">
    <molecule id="A6XGL0-1"/>
    <property type="nucleotide sequence ID" value="NM_198537.4"/>
</dbReference>
<dbReference type="SMR" id="A6XGL0"/>
<dbReference type="BioGRID" id="131931">
    <property type="interactions" value="16"/>
</dbReference>
<dbReference type="FunCoup" id="A6XGL0">
    <property type="interactions" value="1"/>
</dbReference>
<dbReference type="IntAct" id="A6XGL0">
    <property type="interactions" value="8"/>
</dbReference>
<dbReference type="STRING" id="9606.ENSP00000426964"/>
<dbReference type="iPTMnet" id="A6XGL0"/>
<dbReference type="PhosphoSitePlus" id="A6XGL0"/>
<dbReference type="BioMuta" id="YJEFN3"/>
<dbReference type="MassIVE" id="A6XGL0"/>
<dbReference type="PaxDb" id="9606-ENSP00000426964"/>
<dbReference type="PeptideAtlas" id="A6XGL0"/>
<dbReference type="ProteomicsDB" id="1760">
    <molecule id="A6XGL0-1"/>
</dbReference>
<dbReference type="ProteomicsDB" id="1761">
    <molecule id="A6XGL0-2"/>
</dbReference>
<dbReference type="Antibodypedia" id="54853">
    <property type="antibodies" value="8 antibodies from 6 providers"/>
</dbReference>
<dbReference type="DNASU" id="374887"/>
<dbReference type="Ensembl" id="ENST00000436027.9">
    <molecule id="A6XGL0-2"/>
    <property type="protein sequence ID" value="ENSP00000398520.2"/>
    <property type="gene ID" value="ENSG00000250067.12"/>
</dbReference>
<dbReference type="Ensembl" id="ENST00000514277.6">
    <molecule id="A6XGL0-1"/>
    <property type="protein sequence ID" value="ENSP00000426964.1"/>
    <property type="gene ID" value="ENSG00000250067.12"/>
</dbReference>
<dbReference type="GeneID" id="374887"/>
<dbReference type="KEGG" id="hsa:374887"/>
<dbReference type="MANE-Select" id="ENST00000514277.6">
    <property type="protein sequence ID" value="ENSP00000426964.1"/>
    <property type="RefSeq nucleotide sequence ID" value="NM_198537.4"/>
    <property type="RefSeq protein sequence ID" value="NP_940939.2"/>
</dbReference>
<dbReference type="UCSC" id="uc002nmt.3">
    <molecule id="A6XGL0-1"/>
    <property type="organism name" value="human"/>
</dbReference>
<dbReference type="AGR" id="HGNC:24785"/>
<dbReference type="CTD" id="374887"/>
<dbReference type="DisGeNET" id="374887"/>
<dbReference type="GeneCards" id="YJEFN3"/>
<dbReference type="HGNC" id="HGNC:24785">
    <property type="gene designation" value="YJEFN3"/>
</dbReference>
<dbReference type="HPA" id="ENSG00000250067">
    <property type="expression patterns" value="Tissue enriched (brain)"/>
</dbReference>
<dbReference type="MIM" id="618607">
    <property type="type" value="gene"/>
</dbReference>
<dbReference type="neXtProt" id="NX_A6XGL0"/>
<dbReference type="OpenTargets" id="ENSG00000250067"/>
<dbReference type="PharmGKB" id="PA164727608"/>
<dbReference type="VEuPathDB" id="HostDB:ENSG00000250067"/>
<dbReference type="eggNOG" id="KOG2585">
    <property type="taxonomic scope" value="Eukaryota"/>
</dbReference>
<dbReference type="GeneTree" id="ENSGT00390000007227"/>
<dbReference type="HOGENOM" id="CLU_024853_3_0_1"/>
<dbReference type="InParanoid" id="A6XGL0"/>
<dbReference type="OMA" id="HSCAMAV"/>
<dbReference type="OrthoDB" id="10064708at2759"/>
<dbReference type="PAN-GO" id="A6XGL0">
    <property type="GO annotations" value="2 GO annotations based on evolutionary models"/>
</dbReference>
<dbReference type="PhylomeDB" id="A6XGL0"/>
<dbReference type="TreeFam" id="TF300197"/>
<dbReference type="PathwayCommons" id="A6XGL0"/>
<dbReference type="SignaLink" id="A6XGL0"/>
<dbReference type="BioGRID-ORCS" id="374887">
    <property type="hits" value="69 hits in 1154 CRISPR screens"/>
</dbReference>
<dbReference type="ChiTaRS" id="YJEFN3">
    <property type="organism name" value="human"/>
</dbReference>
<dbReference type="GenomeRNAi" id="374887"/>
<dbReference type="Pharos" id="A6XGL0">
    <property type="development level" value="Tdark"/>
</dbReference>
<dbReference type="PRO" id="PR:A6XGL0"/>
<dbReference type="Proteomes" id="UP000005640">
    <property type="component" value="Chromosome 19"/>
</dbReference>
<dbReference type="RNAct" id="A6XGL0">
    <property type="molecule type" value="protein"/>
</dbReference>
<dbReference type="Bgee" id="ENSG00000250067">
    <property type="expression patterns" value="Expressed in putamen and 98 other cell types or tissues"/>
</dbReference>
<dbReference type="ExpressionAtlas" id="A6XGL0">
    <property type="expression patterns" value="baseline and differential"/>
</dbReference>
<dbReference type="GO" id="GO:0005739">
    <property type="term" value="C:mitochondrion"/>
    <property type="evidence" value="ECO:0000318"/>
    <property type="project" value="GO_Central"/>
</dbReference>
<dbReference type="GO" id="GO:0052856">
    <property type="term" value="F:NAD(P)HX epimerase activity"/>
    <property type="evidence" value="ECO:0000318"/>
    <property type="project" value="GO_Central"/>
</dbReference>
<dbReference type="GO" id="GO:0071425">
    <property type="term" value="P:hematopoietic stem cell proliferation"/>
    <property type="evidence" value="ECO:0000250"/>
    <property type="project" value="UniProtKB"/>
</dbReference>
<dbReference type="GO" id="GO:0006869">
    <property type="term" value="P:lipid transport"/>
    <property type="evidence" value="ECO:0007669"/>
    <property type="project" value="UniProtKB-KW"/>
</dbReference>
<dbReference type="GO" id="GO:0031580">
    <property type="term" value="P:membrane raft distribution"/>
    <property type="evidence" value="ECO:0000250"/>
    <property type="project" value="UniProtKB"/>
</dbReference>
<dbReference type="GO" id="GO:0016525">
    <property type="term" value="P:negative regulation of angiogenesis"/>
    <property type="evidence" value="ECO:0000250"/>
    <property type="project" value="UniProtKB"/>
</dbReference>
<dbReference type="GO" id="GO:0010874">
    <property type="term" value="P:regulation of cholesterol efflux"/>
    <property type="evidence" value="ECO:0000250"/>
    <property type="project" value="UniProtKB"/>
</dbReference>
<dbReference type="GO" id="GO:0008593">
    <property type="term" value="P:regulation of Notch signaling pathway"/>
    <property type="evidence" value="ECO:0000250"/>
    <property type="project" value="UniProtKB"/>
</dbReference>
<dbReference type="GO" id="GO:0002040">
    <property type="term" value="P:sprouting angiogenesis"/>
    <property type="evidence" value="ECO:0000250"/>
    <property type="project" value="UniProtKB"/>
</dbReference>
<dbReference type="FunFam" id="3.40.50.10260:FF:000004">
    <property type="entry name" value="yjeF N-terminal domain-containing protein 3"/>
    <property type="match status" value="1"/>
</dbReference>
<dbReference type="Gene3D" id="3.40.50.10260">
    <property type="entry name" value="YjeF N-terminal domain"/>
    <property type="match status" value="1"/>
</dbReference>
<dbReference type="InterPro" id="IPR004443">
    <property type="entry name" value="YjeF_N_dom"/>
</dbReference>
<dbReference type="InterPro" id="IPR036652">
    <property type="entry name" value="YjeF_N_dom_sf"/>
</dbReference>
<dbReference type="InterPro" id="IPR032976">
    <property type="entry name" value="YJEFN_prot_NAXE-like"/>
</dbReference>
<dbReference type="NCBIfam" id="TIGR00197">
    <property type="entry name" value="yjeF_nterm"/>
    <property type="match status" value="1"/>
</dbReference>
<dbReference type="PANTHER" id="PTHR13232">
    <property type="entry name" value="NAD(P)H-HYDRATE EPIMERASE"/>
    <property type="match status" value="1"/>
</dbReference>
<dbReference type="PANTHER" id="PTHR13232:SF12">
    <property type="entry name" value="YJEF N-TERMINAL DOMAIN-CONTAINING PROTEIN 3"/>
    <property type="match status" value="1"/>
</dbReference>
<dbReference type="Pfam" id="PF03853">
    <property type="entry name" value="YjeF_N"/>
    <property type="match status" value="1"/>
</dbReference>
<dbReference type="SUPFAM" id="SSF64153">
    <property type="entry name" value="YjeF N-terminal domain-like"/>
    <property type="match status" value="1"/>
</dbReference>
<dbReference type="PROSITE" id="PS51385">
    <property type="entry name" value="YJEF_N"/>
    <property type="match status" value="1"/>
</dbReference>
<gene>
    <name type="primary">YJEFN3</name>
    <name evidence="1" type="synonym">AIBP2</name>
</gene>
<feature type="chain" id="PRO_0000348461" description="YjeF N-terminal domain-containing protein 3">
    <location>
        <begin position="1"/>
        <end position="299"/>
    </location>
</feature>
<feature type="domain" description="YjeF N-terminal" evidence="2">
    <location>
        <begin position="74"/>
        <end position="287"/>
    </location>
</feature>
<feature type="splice variant" id="VSP_035170" description="In isoform 2." evidence="5">
    <location>
        <begin position="20"/>
        <end position="69"/>
    </location>
</feature>
<feature type="sequence variant" id="VAR_061989" description="In dbSNP:rs58031491.">
    <original>A</original>
    <variation>T</variation>
    <location>
        <position position="213"/>
    </location>
</feature>
<feature type="sequence conflict" description="In Ref. 4; BC020948." evidence="6" ref="4">
    <original>T</original>
    <variation>A</variation>
    <location>
        <position position="293"/>
    </location>
</feature>
<accession>A6XGL0</accession>
<accession>A6XGK9</accession>
<accession>Q4G1C0</accession>
<organism>
    <name type="scientific">Homo sapiens</name>
    <name type="common">Human</name>
    <dbReference type="NCBI Taxonomy" id="9606"/>
    <lineage>
        <taxon>Eukaryota</taxon>
        <taxon>Metazoa</taxon>
        <taxon>Chordata</taxon>
        <taxon>Craniata</taxon>
        <taxon>Vertebrata</taxon>
        <taxon>Euteleostomi</taxon>
        <taxon>Mammalia</taxon>
        <taxon>Eutheria</taxon>
        <taxon>Euarchontoglires</taxon>
        <taxon>Primates</taxon>
        <taxon>Haplorrhini</taxon>
        <taxon>Catarrhini</taxon>
        <taxon>Hominidae</taxon>
        <taxon>Homo</taxon>
    </lineage>
</organism>
<comment type="function">
    <text evidence="1 3">May accelerate cholesterol efflux from endothelial cells to high-density lipoprotein (HDL) and thereby regulates angiogenesis. May orchestrate hematopoietic stem and progenitor cell emergence from the hemogenic endothelium, a type of specialized endothelium manifesting hematopoietic potential. YJEFN3-mediated cholesterol efflux activates endothelial SREBF2, the master transcription factor for cholesterol biosynthesis, which in turn transactivates NOTCH and promotes hematopoietic stem and progenitor cell emergence (By similarity). May play a role in spermiogenesis and oogenesis (PubMed:17533573).</text>
</comment>
<comment type="subunit">
    <text evidence="3 4">Interacts with APOA1 (PubMed:23719382). Binds to HDL (PubMed:17533573).</text>
</comment>
<comment type="interaction">
    <interactant intactId="EBI-13070200">
        <id>A6XGL0</id>
    </interactant>
    <interactant intactId="EBI-372312">
        <id>P28062-2</id>
        <label>PSMB8</label>
    </interactant>
    <organismsDiffer>false</organismsDiffer>
    <experiments>3</experiments>
</comment>
<comment type="alternative products">
    <event type="alternative splicing"/>
    <isoform>
        <id>A6XGL0-1</id>
        <name>1</name>
        <sequence type="displayed"/>
    </isoform>
    <isoform>
        <id>A6XGL0-2</id>
        <name>2</name>
        <sequence type="described" ref="VSP_035170"/>
    </isoform>
</comment>
<comment type="tissue specificity">
    <text evidence="3">Expressed in theca cells in ovary and in Leydig cells in testis (at protein level). Also expressed in brain and mammary gland.</text>
</comment>
<comment type="sequence caution" evidence="6">
    <conflict type="frameshift">
        <sequence resource="EMBL" id="BC020948"/>
    </conflict>
</comment>
<evidence type="ECO:0000250" key="1">
    <source>
        <dbReference type="UniProtKB" id="Q1LVI2"/>
    </source>
</evidence>
<evidence type="ECO:0000255" key="2">
    <source>
        <dbReference type="PROSITE-ProRule" id="PRU00719"/>
    </source>
</evidence>
<evidence type="ECO:0000269" key="3">
    <source>
    </source>
</evidence>
<evidence type="ECO:0000269" key="4">
    <source>
    </source>
</evidence>
<evidence type="ECO:0000303" key="5">
    <source ref="1"/>
</evidence>
<evidence type="ECO:0000305" key="6"/>
<keyword id="KW-0025">Alternative splicing</keyword>
<keyword id="KW-0445">Lipid transport</keyword>
<keyword id="KW-1267">Proteomics identification</keyword>
<keyword id="KW-1185">Reference proteome</keyword>
<keyword id="KW-0813">Transport</keyword>
<proteinExistence type="evidence at protein level"/>